<protein>
    <recommendedName>
        <fullName evidence="1">Nuclear pore complex protein NUP155</fullName>
    </recommendedName>
    <alternativeName>
        <fullName evidence="7">Nucleoporin 155</fullName>
    </alternativeName>
</protein>
<feature type="initiator methionine" description="Removed" evidence="9">
    <location>
        <position position="1"/>
    </location>
</feature>
<feature type="chain" id="PRO_0000431077" description="Nuclear pore complex protein NUP155">
    <location>
        <begin position="2"/>
        <end position="1464"/>
    </location>
</feature>
<feature type="modified residue" description="N-acetylserine" evidence="9">
    <location>
        <position position="2"/>
    </location>
</feature>
<gene>
    <name evidence="1" type="primary">NUP155</name>
    <name evidence="5" type="ordered locus">At1g14850</name>
    <name evidence="6" type="ORF">F10B6.25</name>
</gene>
<organism evidence="8">
    <name type="scientific">Arabidopsis thaliana</name>
    <name type="common">Mouse-ear cress</name>
    <dbReference type="NCBI Taxonomy" id="3702"/>
    <lineage>
        <taxon>Eukaryota</taxon>
        <taxon>Viridiplantae</taxon>
        <taxon>Streptophyta</taxon>
        <taxon>Embryophyta</taxon>
        <taxon>Tracheophyta</taxon>
        <taxon>Spermatophyta</taxon>
        <taxon>Magnoliopsida</taxon>
        <taxon>eudicotyledons</taxon>
        <taxon>Gunneridae</taxon>
        <taxon>Pentapetalae</taxon>
        <taxon>rosids</taxon>
        <taxon>malvids</taxon>
        <taxon>Brassicales</taxon>
        <taxon>Brassicaceae</taxon>
        <taxon>Camelineae</taxon>
        <taxon>Arabidopsis</taxon>
    </lineage>
</organism>
<keyword id="KW-0007">Acetylation</keyword>
<keyword id="KW-0509">mRNA transport</keyword>
<keyword id="KW-0906">Nuclear pore complex</keyword>
<keyword id="KW-0539">Nucleus</keyword>
<keyword id="KW-0653">Protein transport</keyword>
<keyword id="KW-1185">Reference proteome</keyword>
<keyword id="KW-0811">Translocation</keyword>
<keyword id="KW-0813">Transport</keyword>
<reference key="1">
    <citation type="journal article" date="2000" name="Nature">
        <title>Sequence and analysis of chromosome 1 of the plant Arabidopsis thaliana.</title>
        <authorList>
            <person name="Theologis A."/>
            <person name="Ecker J.R."/>
            <person name="Palm C.J."/>
            <person name="Federspiel N.A."/>
            <person name="Kaul S."/>
            <person name="White O."/>
            <person name="Alonso J."/>
            <person name="Altafi H."/>
            <person name="Araujo R."/>
            <person name="Bowman C.L."/>
            <person name="Brooks S.Y."/>
            <person name="Buehler E."/>
            <person name="Chan A."/>
            <person name="Chao Q."/>
            <person name="Chen H."/>
            <person name="Cheuk R.F."/>
            <person name="Chin C.W."/>
            <person name="Chung M.K."/>
            <person name="Conn L."/>
            <person name="Conway A.B."/>
            <person name="Conway A.R."/>
            <person name="Creasy T.H."/>
            <person name="Dewar K."/>
            <person name="Dunn P."/>
            <person name="Etgu P."/>
            <person name="Feldblyum T.V."/>
            <person name="Feng J.-D."/>
            <person name="Fong B."/>
            <person name="Fujii C.Y."/>
            <person name="Gill J.E."/>
            <person name="Goldsmith A.D."/>
            <person name="Haas B."/>
            <person name="Hansen N.F."/>
            <person name="Hughes B."/>
            <person name="Huizar L."/>
            <person name="Hunter J.L."/>
            <person name="Jenkins J."/>
            <person name="Johnson-Hopson C."/>
            <person name="Khan S."/>
            <person name="Khaykin E."/>
            <person name="Kim C.J."/>
            <person name="Koo H.L."/>
            <person name="Kremenetskaia I."/>
            <person name="Kurtz D.B."/>
            <person name="Kwan A."/>
            <person name="Lam B."/>
            <person name="Langin-Hooper S."/>
            <person name="Lee A."/>
            <person name="Lee J.M."/>
            <person name="Lenz C.A."/>
            <person name="Li J.H."/>
            <person name="Li Y.-P."/>
            <person name="Lin X."/>
            <person name="Liu S.X."/>
            <person name="Liu Z.A."/>
            <person name="Luros J.S."/>
            <person name="Maiti R."/>
            <person name="Marziali A."/>
            <person name="Militscher J."/>
            <person name="Miranda M."/>
            <person name="Nguyen M."/>
            <person name="Nierman W.C."/>
            <person name="Osborne B.I."/>
            <person name="Pai G."/>
            <person name="Peterson J."/>
            <person name="Pham P.K."/>
            <person name="Rizzo M."/>
            <person name="Rooney T."/>
            <person name="Rowley D."/>
            <person name="Sakano H."/>
            <person name="Salzberg S.L."/>
            <person name="Schwartz J.R."/>
            <person name="Shinn P."/>
            <person name="Southwick A.M."/>
            <person name="Sun H."/>
            <person name="Tallon L.J."/>
            <person name="Tambunga G."/>
            <person name="Toriumi M.J."/>
            <person name="Town C.D."/>
            <person name="Utterback T."/>
            <person name="Van Aken S."/>
            <person name="Vaysberg M."/>
            <person name="Vysotskaia V.S."/>
            <person name="Walker M."/>
            <person name="Wu D."/>
            <person name="Yu G."/>
            <person name="Fraser C.M."/>
            <person name="Venter J.C."/>
            <person name="Davis R.W."/>
        </authorList>
    </citation>
    <scope>NUCLEOTIDE SEQUENCE [LARGE SCALE GENOMIC DNA]</scope>
    <source>
        <strain>cv. Columbia</strain>
    </source>
</reference>
<reference key="2">
    <citation type="journal article" date="2017" name="Plant J.">
        <title>Araport11: a complete reannotation of the Arabidopsis thaliana reference genome.</title>
        <authorList>
            <person name="Cheng C.Y."/>
            <person name="Krishnakumar V."/>
            <person name="Chan A.P."/>
            <person name="Thibaud-Nissen F."/>
            <person name="Schobel S."/>
            <person name="Town C.D."/>
        </authorList>
    </citation>
    <scope>GENOME REANNOTATION</scope>
    <source>
        <strain>cv. Columbia</strain>
    </source>
</reference>
<reference key="3">
    <citation type="journal article" date="2002" name="Gene">
        <title>Genomic organization, transcript variants and comparative analysis of the human nucleoporin 155 (NUP155) gene.</title>
        <authorList>
            <person name="Zhang X."/>
            <person name="Yang H."/>
            <person name="Yu J."/>
            <person name="Chen C."/>
            <person name="Zhang G."/>
            <person name="Bao J."/>
            <person name="Du Y."/>
            <person name="Kibukawa M."/>
            <person name="Li Z."/>
            <person name="Wang J."/>
            <person name="Hu S."/>
            <person name="Dong W."/>
            <person name="Wang J."/>
            <person name="Gregersen N."/>
            <person name="Niebuhr E."/>
            <person name="Bolund L."/>
        </authorList>
    </citation>
    <scope>IDENTIFICATION</scope>
    <scope>FUNCTION</scope>
</reference>
<reference key="4">
    <citation type="journal article" date="2010" name="Plant Cell">
        <title>Identification and characterization of nuclear pore complex components in Arabidopsis thaliana.</title>
        <authorList>
            <person name="Tamura K."/>
            <person name="Fukao Y."/>
            <person name="Iwamoto M."/>
            <person name="Haraguchi T."/>
            <person name="Hara-Nishimura I."/>
        </authorList>
    </citation>
    <scope>IDENTIFICATION IN THE NUCLEAR PORE COMPLEX BY MASS SPECTROMETRY</scope>
    <scope>NOMENCLATURE</scope>
</reference>
<reference key="5">
    <citation type="journal article" date="2012" name="Mol. Cell. Proteomics">
        <title>Comparative large-scale characterisation of plant vs. mammal proteins reveals similar and idiosyncratic N-alpha acetylation features.</title>
        <authorList>
            <person name="Bienvenut W.V."/>
            <person name="Sumpton D."/>
            <person name="Martinez A."/>
            <person name="Lilla S."/>
            <person name="Espagne C."/>
            <person name="Meinnel T."/>
            <person name="Giglione C."/>
        </authorList>
    </citation>
    <scope>ACETYLATION [LARGE SCALE ANALYSIS] AT SER-2</scope>
    <scope>CLEAVAGE OF INITIATOR METHIONINE [LARGE SCALE ANALYSIS]</scope>
    <scope>IDENTIFICATION BY MASS SPECTROMETRY [LARGE SCALE ANALYSIS]</scope>
</reference>
<sequence>MSQDDEIVMRDVTSAGICIGDRIGREAASQLDLEEALEASRYASHPYSTHPREWPPLIEVGETWELPSVLIERYNTAGGEGTALCGIFPEIRRAWASVDNSLFLWRFDKRDGQCPEYSGEEQAICAVGLAKCRPGVFVEAIQYLLVLATPVELVLVGVCCTEGPDGRDPYAEISVQPLPDYTISSDGVTMTCVTCTNKGRIFMAGRDGHIYELLYTTGSGWNKRCRKVCLTAGVGSMISRWVVPNVFKFGAVDPVVEMVVDNERQILYARTEEMKLQAYVSGPNGEGPLKKVAEERNLLNQKDLSQGNRQSAVAGRSNKPSIVSISPLSMLESKWLHLVAALSDGRRMYLSTSSSGSGSTISFSGFNNHRQTPNCLKVVSTRPSPPLGVGVGLGFGAASVAGRTQNDDLSMKIETAYYSVGTLVLSDSSPPAMSSLLVVSRDSSVHSQAGSSSGPSSRSSRALREVVSSLPIEGRMLFVADVLPSPDTAATIQSLYSELEYCGVEVSGESYEKACGKLWARSDLSTQHILPRRKIVVFTTMGMMELVFNRPVDILRRLLESNSPRSLLEDFFTRFGVGEAAAMCLMLAARIINFEDLISNIVADKAAEAFEDPRIVGMPQFDGSSGLSNTRTATGGFSMGQVVQEAEPIFSGAHEGLCLCTSRLLFPLWELPVMSKKTSSDTMSEDGVVICRLSTSAMHVLESKIRSLEKFLRSRRNQRRGLYGCVAGLGDVTGSILYGTGSELGATERNMVRNLFGAYSNGGESANKRQRLPYSPAELAATEVRAMECIRQLLLRSAEALFLLQLLSQHHVARLVQELDANLKQALVQLTFHQLVCSEEGDQIATRLISAVMEYYTGSDGRGTVDDISPRLREGCPSYFKESDYKFYLAVERLERAALTSDAEEKENVAREAFSFLSKVPGSADLQTVCKRFEDLRFYEAVVCLPLQKAQALDPAGDAFNDQLDASIREHALAQRKQCYEIIANALRSLASPLASPTLDEASRSQYICQIVHLGVQSTDRAFREYLYKAMIELHLENELLEYGGPDLVPFLQNAGSHSESQVGAVSTGSSPLGHSGTQISSDQAKYFDLLAKYYVSKRQHVLAAHVFLRLAERRAISLGDSPTLERRRDDLSQAVLQAKNASNSDGLVGSAQGVSDSGLLDLLEGKLAVLQFQIKIRDKLEAIASNFESSVAMQDSDQNGQVLDGDSSDDTNLANAANEMAMEVSSELKSVTQLYNEYAVPFELWEICLEMLYFANYSGDADSSIIRETWARLIDQALSQGGIREACAVLKRVGSHIYPGDGVVLPLDVLCLHLERAALERSERIENVRDEDIAKALLAACKGAAEPVLNAYDRLLSNAAVVPSPNLRIRLLRSVLVVLREWAMSVLSDRMGSSPTRSSLILGGSFALENKAALNQGARDKIANAANRYMTEVRRLALPPNKTDGVYAGFKELDESLLSPFSF</sequence>
<accession>F4HXV6</accession>
<accession>Q9LQU6</accession>
<evidence type="ECO:0000303" key="1">
    <source>
    </source>
</evidence>
<evidence type="ECO:0000305" key="2"/>
<evidence type="ECO:0000305" key="3">
    <source>
    </source>
</evidence>
<evidence type="ECO:0000305" key="4">
    <source>
    </source>
</evidence>
<evidence type="ECO:0000312" key="5">
    <source>
        <dbReference type="Araport" id="AT1G14850"/>
    </source>
</evidence>
<evidence type="ECO:0000312" key="6">
    <source>
        <dbReference type="EMBL" id="AAF79236.1"/>
    </source>
</evidence>
<evidence type="ECO:0000312" key="7">
    <source>
        <dbReference type="EMBL" id="AEE29235.1"/>
    </source>
</evidence>
<evidence type="ECO:0000312" key="8">
    <source>
        <dbReference type="Proteomes" id="UP000006548"/>
    </source>
</evidence>
<evidence type="ECO:0007744" key="9">
    <source>
    </source>
</evidence>
<comment type="function">
    <text evidence="3">Major component of the nuclear pore complex (NPC).</text>
</comment>
<comment type="subunit">
    <text evidence="4">Part of the nuclear pore complex (NPC). The NPC has an eight-fold symmetrical structure comprising a central transport channel and two rings, the cytoplasmic and nuclear rings, to which eight filaments are attached. The cytoplasmic filaments have loose ends, while the nuclear filaments are joined in a distal ring, forming a nuclear basket. NPCs are highly dynamic in configuration and composition, and can be devided in 3 subcomplexes, the NUP62 subcomplex, the NUP107-160 subcomplex and the NUP93 subcomplex, containing approximately 30 different nucleoporin proteins.</text>
</comment>
<comment type="subcellular location">
    <subcellularLocation>
        <location evidence="4">Nucleus</location>
        <location evidence="4">Nuclear pore complex</location>
    </subcellularLocation>
</comment>
<comment type="similarity">
    <text evidence="2">Belongs to the non-repetitive/WGA-negative nucleoporin family.</text>
</comment>
<comment type="sequence caution" evidence="2">
    <conflict type="erroneous gene model prediction">
        <sequence resource="EMBL-CDS" id="AAF79236"/>
    </conflict>
</comment>
<proteinExistence type="evidence at protein level"/>
<dbReference type="EMBL" id="AC006917">
    <property type="protein sequence ID" value="AAF79236.1"/>
    <property type="status" value="ALT_SEQ"/>
    <property type="molecule type" value="Genomic_DNA"/>
</dbReference>
<dbReference type="EMBL" id="CP002684">
    <property type="protein sequence ID" value="AEE29235.1"/>
    <property type="molecule type" value="Genomic_DNA"/>
</dbReference>
<dbReference type="RefSeq" id="NP_172938.2">
    <property type="nucleotide sequence ID" value="NM_101354.3"/>
</dbReference>
<dbReference type="SMR" id="F4HXV6"/>
<dbReference type="BioGRID" id="23290">
    <property type="interactions" value="5"/>
</dbReference>
<dbReference type="FunCoup" id="F4HXV6">
    <property type="interactions" value="4867"/>
</dbReference>
<dbReference type="STRING" id="3702.F4HXV6"/>
<dbReference type="iPTMnet" id="F4HXV6"/>
<dbReference type="PaxDb" id="3702-AT1G14850.1"/>
<dbReference type="ProteomicsDB" id="249210"/>
<dbReference type="EnsemblPlants" id="AT1G14850.1">
    <property type="protein sequence ID" value="AT1G14850.1"/>
    <property type="gene ID" value="AT1G14850"/>
</dbReference>
<dbReference type="GeneID" id="838050"/>
<dbReference type="Gramene" id="AT1G14850.1">
    <property type="protein sequence ID" value="AT1G14850.1"/>
    <property type="gene ID" value="AT1G14850"/>
</dbReference>
<dbReference type="KEGG" id="ath:AT1G14850"/>
<dbReference type="Araport" id="AT1G14850"/>
<dbReference type="TAIR" id="AT1G14850">
    <property type="gene designation" value="NUP155"/>
</dbReference>
<dbReference type="eggNOG" id="KOG1900">
    <property type="taxonomic scope" value="Eukaryota"/>
</dbReference>
<dbReference type="HOGENOM" id="CLU_000429_1_0_1"/>
<dbReference type="InParanoid" id="F4HXV6"/>
<dbReference type="OMA" id="SWAPFQK"/>
<dbReference type="OrthoDB" id="338970at2759"/>
<dbReference type="CD-CODE" id="4299E36E">
    <property type="entry name" value="Nucleolus"/>
</dbReference>
<dbReference type="PRO" id="PR:F4HXV6"/>
<dbReference type="Proteomes" id="UP000006548">
    <property type="component" value="Chromosome 1"/>
</dbReference>
<dbReference type="ExpressionAtlas" id="F4HXV6">
    <property type="expression patterns" value="baseline and differential"/>
</dbReference>
<dbReference type="GO" id="GO:0005643">
    <property type="term" value="C:nuclear pore"/>
    <property type="evidence" value="ECO:0000250"/>
    <property type="project" value="TAIR"/>
</dbReference>
<dbReference type="GO" id="GO:0005730">
    <property type="term" value="C:nucleolus"/>
    <property type="evidence" value="ECO:0007005"/>
    <property type="project" value="TAIR"/>
</dbReference>
<dbReference type="GO" id="GO:0005886">
    <property type="term" value="C:plasma membrane"/>
    <property type="evidence" value="ECO:0007005"/>
    <property type="project" value="TAIR"/>
</dbReference>
<dbReference type="GO" id="GO:0009506">
    <property type="term" value="C:plasmodesma"/>
    <property type="evidence" value="ECO:0007005"/>
    <property type="project" value="TAIR"/>
</dbReference>
<dbReference type="GO" id="GO:0017056">
    <property type="term" value="F:structural constituent of nuclear pore"/>
    <property type="evidence" value="ECO:0007669"/>
    <property type="project" value="InterPro"/>
</dbReference>
<dbReference type="GO" id="GO:0051028">
    <property type="term" value="P:mRNA transport"/>
    <property type="evidence" value="ECO:0007669"/>
    <property type="project" value="UniProtKB-KW"/>
</dbReference>
<dbReference type="GO" id="GO:0006913">
    <property type="term" value="P:nucleocytoplasmic transport"/>
    <property type="evidence" value="ECO:0000250"/>
    <property type="project" value="TAIR"/>
</dbReference>
<dbReference type="GO" id="GO:0015031">
    <property type="term" value="P:protein transport"/>
    <property type="evidence" value="ECO:0007669"/>
    <property type="project" value="UniProtKB-KW"/>
</dbReference>
<dbReference type="FunFam" id="1.20.120.1880:FF:000002">
    <property type="entry name" value="Nuclear pore complex protein NUP155"/>
    <property type="match status" value="1"/>
</dbReference>
<dbReference type="FunFam" id="1.25.40.440:FF:000002">
    <property type="entry name" value="Nuclear pore complex protein NUP155"/>
    <property type="match status" value="1"/>
</dbReference>
<dbReference type="FunFam" id="1.25.40.450:FF:000003">
    <property type="entry name" value="Nuclear pore complex protein NUP155"/>
    <property type="match status" value="1"/>
</dbReference>
<dbReference type="Gene3D" id="1.20.58.1780">
    <property type="match status" value="1"/>
</dbReference>
<dbReference type="Gene3D" id="1.20.120.1880">
    <property type="entry name" value="Nucleoporin, helical C-terminal domain"/>
    <property type="match status" value="1"/>
</dbReference>
<dbReference type="Gene3D" id="1.25.40.440">
    <property type="entry name" value="Nucleoporin, helical domain, central subdomain"/>
    <property type="match status" value="1"/>
</dbReference>
<dbReference type="Gene3D" id="1.25.40.450">
    <property type="entry name" value="Nucleoporin, helical domain, N-terminal subdomain"/>
    <property type="match status" value="1"/>
</dbReference>
<dbReference type="InterPro" id="IPR007187">
    <property type="entry name" value="Nucleoporin_Nup133/Nup155_C"/>
</dbReference>
<dbReference type="InterPro" id="IPR014908">
    <property type="entry name" value="Nucleoporin_Nup133/Nup155_N"/>
</dbReference>
<dbReference type="InterPro" id="IPR004870">
    <property type="entry name" value="Nucleoporin_Nup155"/>
</dbReference>
<dbReference type="InterPro" id="IPR042533">
    <property type="entry name" value="Nucleoporin_Nup155_C_1"/>
</dbReference>
<dbReference type="InterPro" id="IPR042537">
    <property type="entry name" value="Nucleoporin_Nup155_C_2"/>
</dbReference>
<dbReference type="InterPro" id="IPR042538">
    <property type="entry name" value="Nucleoporin_Nup155_C_3"/>
</dbReference>
<dbReference type="PANTHER" id="PTHR10350">
    <property type="entry name" value="NUCLEAR PORE COMPLEX PROTEIN NUP155"/>
    <property type="match status" value="1"/>
</dbReference>
<dbReference type="PANTHER" id="PTHR10350:SF6">
    <property type="entry name" value="NUCLEAR PORE COMPLEX PROTEIN NUP155"/>
    <property type="match status" value="1"/>
</dbReference>
<dbReference type="Pfam" id="PF03177">
    <property type="entry name" value="Nucleoporin_C"/>
    <property type="match status" value="1"/>
</dbReference>
<dbReference type="Pfam" id="PF08801">
    <property type="entry name" value="Nucleoporin_N"/>
    <property type="match status" value="1"/>
</dbReference>
<name>NU155_ARATH</name>